<accession>A8ZXW2</accession>
<sequence length="457" mass="49316">MYLKAYHIYFVGIGGIGMSGIAELLLNLGYTVSGSDIRQSDITDRLTGLGGKIFYGHDGKNIGGADVVVVSSAIAADNPEVAAAREAGIPVIPRAEMLAEILRLKYSIVIAGAHGKTSTTSMVASVLGQGGMDPTVVIGGKLKSIGTNAVLGHGDYIVAEADESDGSFLKFSPSIAVVTNIDREHLDFYPDLAAISKSFLEFLDRIPFYGVAVVCLDNEPLQALVPLIKKRFITYGTSNQADLQARHITPINGKVRFSVVWRQEELGTIDLGVPGFHNVRNALAAVAVGLELGLAFAVIKEALETMAGVQRRLEKKGETGGVIVVDDYGHHPTEIKATLQGVRQHWEDRRVVVVFQPHRYSRTKALFDDFTRAFYQCDELVVLPIYAAGEHPIDGVDGESVAEGIRAHGHKGVRYVEGRAEAVAYLKEILQKGDILLTLGAGDVWRIGEDVLSGQER</sequence>
<protein>
    <recommendedName>
        <fullName evidence="1">UDP-N-acetylmuramate--L-alanine ligase</fullName>
        <ecNumber evidence="1">6.3.2.8</ecNumber>
    </recommendedName>
    <alternativeName>
        <fullName evidence="1">UDP-N-acetylmuramoyl-L-alanine synthetase</fullName>
    </alternativeName>
</protein>
<feature type="chain" id="PRO_1000091098" description="UDP-N-acetylmuramate--L-alanine ligase">
    <location>
        <begin position="1"/>
        <end position="457"/>
    </location>
</feature>
<feature type="binding site" evidence="1">
    <location>
        <begin position="112"/>
        <end position="118"/>
    </location>
    <ligand>
        <name>ATP</name>
        <dbReference type="ChEBI" id="CHEBI:30616"/>
    </ligand>
</feature>
<proteinExistence type="inferred from homology"/>
<organism>
    <name type="scientific">Desulfosudis oleivorans (strain DSM 6200 / JCM 39069 / Hxd3)</name>
    <name type="common">Desulfococcus oleovorans</name>
    <dbReference type="NCBI Taxonomy" id="96561"/>
    <lineage>
        <taxon>Bacteria</taxon>
        <taxon>Pseudomonadati</taxon>
        <taxon>Thermodesulfobacteriota</taxon>
        <taxon>Desulfobacteria</taxon>
        <taxon>Desulfobacterales</taxon>
        <taxon>Desulfosudaceae</taxon>
        <taxon>Desulfosudis</taxon>
    </lineage>
</organism>
<keyword id="KW-0067">ATP-binding</keyword>
<keyword id="KW-0131">Cell cycle</keyword>
<keyword id="KW-0132">Cell division</keyword>
<keyword id="KW-0133">Cell shape</keyword>
<keyword id="KW-0961">Cell wall biogenesis/degradation</keyword>
<keyword id="KW-0963">Cytoplasm</keyword>
<keyword id="KW-0436">Ligase</keyword>
<keyword id="KW-0547">Nucleotide-binding</keyword>
<keyword id="KW-0573">Peptidoglycan synthesis</keyword>
<keyword id="KW-1185">Reference proteome</keyword>
<gene>
    <name evidence="1" type="primary">murC</name>
    <name type="ordered locus">Dole_2786</name>
</gene>
<comment type="function">
    <text evidence="1">Cell wall formation.</text>
</comment>
<comment type="catalytic activity">
    <reaction evidence="1">
        <text>UDP-N-acetyl-alpha-D-muramate + L-alanine + ATP = UDP-N-acetyl-alpha-D-muramoyl-L-alanine + ADP + phosphate + H(+)</text>
        <dbReference type="Rhea" id="RHEA:23372"/>
        <dbReference type="ChEBI" id="CHEBI:15378"/>
        <dbReference type="ChEBI" id="CHEBI:30616"/>
        <dbReference type="ChEBI" id="CHEBI:43474"/>
        <dbReference type="ChEBI" id="CHEBI:57972"/>
        <dbReference type="ChEBI" id="CHEBI:70757"/>
        <dbReference type="ChEBI" id="CHEBI:83898"/>
        <dbReference type="ChEBI" id="CHEBI:456216"/>
        <dbReference type="EC" id="6.3.2.8"/>
    </reaction>
</comment>
<comment type="pathway">
    <text evidence="1">Cell wall biogenesis; peptidoglycan biosynthesis.</text>
</comment>
<comment type="subcellular location">
    <subcellularLocation>
        <location evidence="1">Cytoplasm</location>
    </subcellularLocation>
</comment>
<comment type="similarity">
    <text evidence="1">Belongs to the MurCDEF family.</text>
</comment>
<reference key="1">
    <citation type="submission" date="2007-10" db="EMBL/GenBank/DDBJ databases">
        <title>Complete sequence of Desulfococcus oleovorans Hxd3.</title>
        <authorList>
            <consortium name="US DOE Joint Genome Institute"/>
            <person name="Copeland A."/>
            <person name="Lucas S."/>
            <person name="Lapidus A."/>
            <person name="Barry K."/>
            <person name="Glavina del Rio T."/>
            <person name="Dalin E."/>
            <person name="Tice H."/>
            <person name="Pitluck S."/>
            <person name="Kiss H."/>
            <person name="Brettin T."/>
            <person name="Bruce D."/>
            <person name="Detter J.C."/>
            <person name="Han C."/>
            <person name="Schmutz J."/>
            <person name="Larimer F."/>
            <person name="Land M."/>
            <person name="Hauser L."/>
            <person name="Kyrpides N."/>
            <person name="Kim E."/>
            <person name="Wawrik B."/>
            <person name="Richardson P."/>
        </authorList>
    </citation>
    <scope>NUCLEOTIDE SEQUENCE [LARGE SCALE GENOMIC DNA]</scope>
    <source>
        <strain>DSM 6200 / JCM 39069 / Hxd3</strain>
    </source>
</reference>
<name>MURC_DESOH</name>
<evidence type="ECO:0000255" key="1">
    <source>
        <dbReference type="HAMAP-Rule" id="MF_00046"/>
    </source>
</evidence>
<dbReference type="EC" id="6.3.2.8" evidence="1"/>
<dbReference type="EMBL" id="CP000859">
    <property type="protein sequence ID" value="ABW68589.1"/>
    <property type="molecule type" value="Genomic_DNA"/>
</dbReference>
<dbReference type="RefSeq" id="WP_012176200.1">
    <property type="nucleotide sequence ID" value="NC_009943.1"/>
</dbReference>
<dbReference type="SMR" id="A8ZXW2"/>
<dbReference type="STRING" id="96561.Dole_2786"/>
<dbReference type="KEGG" id="dol:Dole_2786"/>
<dbReference type="eggNOG" id="COG0773">
    <property type="taxonomic scope" value="Bacteria"/>
</dbReference>
<dbReference type="HOGENOM" id="CLU_028104_2_1_7"/>
<dbReference type="OrthoDB" id="9804126at2"/>
<dbReference type="UniPathway" id="UPA00219"/>
<dbReference type="Proteomes" id="UP000008561">
    <property type="component" value="Chromosome"/>
</dbReference>
<dbReference type="GO" id="GO:0005737">
    <property type="term" value="C:cytoplasm"/>
    <property type="evidence" value="ECO:0007669"/>
    <property type="project" value="UniProtKB-SubCell"/>
</dbReference>
<dbReference type="GO" id="GO:0005524">
    <property type="term" value="F:ATP binding"/>
    <property type="evidence" value="ECO:0007669"/>
    <property type="project" value="UniProtKB-UniRule"/>
</dbReference>
<dbReference type="GO" id="GO:0008763">
    <property type="term" value="F:UDP-N-acetylmuramate-L-alanine ligase activity"/>
    <property type="evidence" value="ECO:0007669"/>
    <property type="project" value="UniProtKB-UniRule"/>
</dbReference>
<dbReference type="GO" id="GO:0051301">
    <property type="term" value="P:cell division"/>
    <property type="evidence" value="ECO:0007669"/>
    <property type="project" value="UniProtKB-KW"/>
</dbReference>
<dbReference type="GO" id="GO:0071555">
    <property type="term" value="P:cell wall organization"/>
    <property type="evidence" value="ECO:0007669"/>
    <property type="project" value="UniProtKB-KW"/>
</dbReference>
<dbReference type="GO" id="GO:0009252">
    <property type="term" value="P:peptidoglycan biosynthetic process"/>
    <property type="evidence" value="ECO:0007669"/>
    <property type="project" value="UniProtKB-UniRule"/>
</dbReference>
<dbReference type="GO" id="GO:0008360">
    <property type="term" value="P:regulation of cell shape"/>
    <property type="evidence" value="ECO:0007669"/>
    <property type="project" value="UniProtKB-KW"/>
</dbReference>
<dbReference type="Gene3D" id="3.90.190.20">
    <property type="entry name" value="Mur ligase, C-terminal domain"/>
    <property type="match status" value="1"/>
</dbReference>
<dbReference type="Gene3D" id="3.40.1190.10">
    <property type="entry name" value="Mur-like, catalytic domain"/>
    <property type="match status" value="1"/>
</dbReference>
<dbReference type="Gene3D" id="3.40.50.720">
    <property type="entry name" value="NAD(P)-binding Rossmann-like Domain"/>
    <property type="match status" value="1"/>
</dbReference>
<dbReference type="HAMAP" id="MF_00046">
    <property type="entry name" value="MurC"/>
    <property type="match status" value="1"/>
</dbReference>
<dbReference type="InterPro" id="IPR036565">
    <property type="entry name" value="Mur-like_cat_sf"/>
</dbReference>
<dbReference type="InterPro" id="IPR004101">
    <property type="entry name" value="Mur_ligase_C"/>
</dbReference>
<dbReference type="InterPro" id="IPR036615">
    <property type="entry name" value="Mur_ligase_C_dom_sf"/>
</dbReference>
<dbReference type="InterPro" id="IPR013221">
    <property type="entry name" value="Mur_ligase_cen"/>
</dbReference>
<dbReference type="InterPro" id="IPR000713">
    <property type="entry name" value="Mur_ligase_N"/>
</dbReference>
<dbReference type="InterPro" id="IPR050061">
    <property type="entry name" value="MurCDEF_pg_biosynth"/>
</dbReference>
<dbReference type="InterPro" id="IPR005758">
    <property type="entry name" value="UDP-N-AcMur_Ala_ligase_MurC"/>
</dbReference>
<dbReference type="NCBIfam" id="TIGR01082">
    <property type="entry name" value="murC"/>
    <property type="match status" value="1"/>
</dbReference>
<dbReference type="PANTHER" id="PTHR43445:SF3">
    <property type="entry name" value="UDP-N-ACETYLMURAMATE--L-ALANINE LIGASE"/>
    <property type="match status" value="1"/>
</dbReference>
<dbReference type="PANTHER" id="PTHR43445">
    <property type="entry name" value="UDP-N-ACETYLMURAMATE--L-ALANINE LIGASE-RELATED"/>
    <property type="match status" value="1"/>
</dbReference>
<dbReference type="Pfam" id="PF01225">
    <property type="entry name" value="Mur_ligase"/>
    <property type="match status" value="1"/>
</dbReference>
<dbReference type="Pfam" id="PF02875">
    <property type="entry name" value="Mur_ligase_C"/>
    <property type="match status" value="1"/>
</dbReference>
<dbReference type="Pfam" id="PF08245">
    <property type="entry name" value="Mur_ligase_M"/>
    <property type="match status" value="1"/>
</dbReference>
<dbReference type="SUPFAM" id="SSF51984">
    <property type="entry name" value="MurCD N-terminal domain"/>
    <property type="match status" value="1"/>
</dbReference>
<dbReference type="SUPFAM" id="SSF53623">
    <property type="entry name" value="MurD-like peptide ligases, catalytic domain"/>
    <property type="match status" value="1"/>
</dbReference>
<dbReference type="SUPFAM" id="SSF53244">
    <property type="entry name" value="MurD-like peptide ligases, peptide-binding domain"/>
    <property type="match status" value="1"/>
</dbReference>